<sequence>MSEEQKLPKEPPILLPGAADFTEEQIEAARVFFAQPVSFIMGAVRMDAMPPSDLPEVAFAGRSNVGKSSLINGLVNQKYLARASNEPGRTREINFFLLAEKVRLVDLPGYGFARVSRSIADKFQDLGRAYLRGRANLKRVYVLIDARHGLKKVDLEALDALDVAAVSYQIVLTKADKIKPAEVDKVVAETQKAIAKRAAAFPRVLATSSEKGLGMPELRAEIVRLCIDE</sequence>
<comment type="function">
    <text evidence="1">Necessary for normal cell division and for the maintenance of normal septation.</text>
</comment>
<comment type="cofactor">
    <cofactor evidence="1">
        <name>Mg(2+)</name>
        <dbReference type="ChEBI" id="CHEBI:18420"/>
    </cofactor>
</comment>
<comment type="similarity">
    <text evidence="1">Belongs to the TRAFAC class TrmE-Era-EngA-EngB-Septin-like GTPase superfamily. EngB GTPase family.</text>
</comment>
<name>ENGB_CAUVN</name>
<proteinExistence type="inferred from homology"/>
<reference key="1">
    <citation type="journal article" date="2010" name="J. Bacteriol.">
        <title>The genetic basis of laboratory adaptation in Caulobacter crescentus.</title>
        <authorList>
            <person name="Marks M.E."/>
            <person name="Castro-Rojas C.M."/>
            <person name="Teiling C."/>
            <person name="Du L."/>
            <person name="Kapatral V."/>
            <person name="Walunas T.L."/>
            <person name="Crosson S."/>
        </authorList>
    </citation>
    <scope>NUCLEOTIDE SEQUENCE [LARGE SCALE GENOMIC DNA]</scope>
    <source>
        <strain>NA1000 / CB15N</strain>
    </source>
</reference>
<gene>
    <name evidence="1" type="primary">engB</name>
    <name type="ordered locus">CCNA_00805</name>
</gene>
<organism>
    <name type="scientific">Caulobacter vibrioides (strain NA1000 / CB15N)</name>
    <name type="common">Caulobacter crescentus</name>
    <dbReference type="NCBI Taxonomy" id="565050"/>
    <lineage>
        <taxon>Bacteria</taxon>
        <taxon>Pseudomonadati</taxon>
        <taxon>Pseudomonadota</taxon>
        <taxon>Alphaproteobacteria</taxon>
        <taxon>Caulobacterales</taxon>
        <taxon>Caulobacteraceae</taxon>
        <taxon>Caulobacter</taxon>
    </lineage>
</organism>
<feature type="chain" id="PRO_1000133050" description="Probable GTP-binding protein EngB">
    <location>
        <begin position="1"/>
        <end position="229"/>
    </location>
</feature>
<feature type="domain" description="EngB-type G" evidence="1">
    <location>
        <begin position="53"/>
        <end position="228"/>
    </location>
</feature>
<feature type="binding site" evidence="1">
    <location>
        <begin position="61"/>
        <end position="68"/>
    </location>
    <ligand>
        <name>GTP</name>
        <dbReference type="ChEBI" id="CHEBI:37565"/>
    </ligand>
</feature>
<feature type="binding site" evidence="1">
    <location>
        <position position="68"/>
    </location>
    <ligand>
        <name>Mg(2+)</name>
        <dbReference type="ChEBI" id="CHEBI:18420"/>
    </ligand>
</feature>
<feature type="binding site" evidence="1">
    <location>
        <begin position="88"/>
        <end position="92"/>
    </location>
    <ligand>
        <name>GTP</name>
        <dbReference type="ChEBI" id="CHEBI:37565"/>
    </ligand>
</feature>
<feature type="binding site" evidence="1">
    <location>
        <position position="90"/>
    </location>
    <ligand>
        <name>Mg(2+)</name>
        <dbReference type="ChEBI" id="CHEBI:18420"/>
    </ligand>
</feature>
<feature type="binding site" evidence="1">
    <location>
        <begin position="106"/>
        <end position="109"/>
    </location>
    <ligand>
        <name>GTP</name>
        <dbReference type="ChEBI" id="CHEBI:37565"/>
    </ligand>
</feature>
<feature type="binding site" evidence="1">
    <location>
        <begin position="173"/>
        <end position="176"/>
    </location>
    <ligand>
        <name>GTP</name>
        <dbReference type="ChEBI" id="CHEBI:37565"/>
    </ligand>
</feature>
<feature type="binding site" evidence="1">
    <location>
        <begin position="207"/>
        <end position="209"/>
    </location>
    <ligand>
        <name>GTP</name>
        <dbReference type="ChEBI" id="CHEBI:37565"/>
    </ligand>
</feature>
<dbReference type="EMBL" id="CP001340">
    <property type="protein sequence ID" value="ACL94270.2"/>
    <property type="molecule type" value="Genomic_DNA"/>
</dbReference>
<dbReference type="SMR" id="B8H1E7"/>
<dbReference type="KEGG" id="ccs:CCNA_00805"/>
<dbReference type="PATRIC" id="fig|565050.3.peg.794"/>
<dbReference type="HOGENOM" id="CLU_033732_2_0_5"/>
<dbReference type="OrthoDB" id="9804921at2"/>
<dbReference type="Proteomes" id="UP000001364">
    <property type="component" value="Chromosome"/>
</dbReference>
<dbReference type="GO" id="GO:0005829">
    <property type="term" value="C:cytosol"/>
    <property type="evidence" value="ECO:0007669"/>
    <property type="project" value="TreeGrafter"/>
</dbReference>
<dbReference type="GO" id="GO:0005525">
    <property type="term" value="F:GTP binding"/>
    <property type="evidence" value="ECO:0007669"/>
    <property type="project" value="UniProtKB-UniRule"/>
</dbReference>
<dbReference type="GO" id="GO:0046872">
    <property type="term" value="F:metal ion binding"/>
    <property type="evidence" value="ECO:0007669"/>
    <property type="project" value="UniProtKB-KW"/>
</dbReference>
<dbReference type="GO" id="GO:0000917">
    <property type="term" value="P:division septum assembly"/>
    <property type="evidence" value="ECO:0007669"/>
    <property type="project" value="UniProtKB-KW"/>
</dbReference>
<dbReference type="CDD" id="cd01876">
    <property type="entry name" value="YihA_EngB"/>
    <property type="match status" value="1"/>
</dbReference>
<dbReference type="Gene3D" id="3.40.50.300">
    <property type="entry name" value="P-loop containing nucleotide triphosphate hydrolases"/>
    <property type="match status" value="1"/>
</dbReference>
<dbReference type="HAMAP" id="MF_00321">
    <property type="entry name" value="GTPase_EngB"/>
    <property type="match status" value="1"/>
</dbReference>
<dbReference type="InterPro" id="IPR030393">
    <property type="entry name" value="G_ENGB_dom"/>
</dbReference>
<dbReference type="InterPro" id="IPR006073">
    <property type="entry name" value="GTP-bd"/>
</dbReference>
<dbReference type="InterPro" id="IPR019987">
    <property type="entry name" value="GTP-bd_ribosome_bio_YsxC"/>
</dbReference>
<dbReference type="InterPro" id="IPR027417">
    <property type="entry name" value="P-loop_NTPase"/>
</dbReference>
<dbReference type="NCBIfam" id="TIGR03598">
    <property type="entry name" value="GTPase_YsxC"/>
    <property type="match status" value="1"/>
</dbReference>
<dbReference type="PANTHER" id="PTHR11649:SF13">
    <property type="entry name" value="ENGB-TYPE G DOMAIN-CONTAINING PROTEIN"/>
    <property type="match status" value="1"/>
</dbReference>
<dbReference type="PANTHER" id="PTHR11649">
    <property type="entry name" value="MSS1/TRME-RELATED GTP-BINDING PROTEIN"/>
    <property type="match status" value="1"/>
</dbReference>
<dbReference type="Pfam" id="PF01926">
    <property type="entry name" value="MMR_HSR1"/>
    <property type="match status" value="1"/>
</dbReference>
<dbReference type="SUPFAM" id="SSF52540">
    <property type="entry name" value="P-loop containing nucleoside triphosphate hydrolases"/>
    <property type="match status" value="1"/>
</dbReference>
<dbReference type="PROSITE" id="PS51706">
    <property type="entry name" value="G_ENGB"/>
    <property type="match status" value="1"/>
</dbReference>
<evidence type="ECO:0000255" key="1">
    <source>
        <dbReference type="HAMAP-Rule" id="MF_00321"/>
    </source>
</evidence>
<accession>B8H1E7</accession>
<keyword id="KW-0131">Cell cycle</keyword>
<keyword id="KW-0132">Cell division</keyword>
<keyword id="KW-0342">GTP-binding</keyword>
<keyword id="KW-0460">Magnesium</keyword>
<keyword id="KW-0479">Metal-binding</keyword>
<keyword id="KW-0547">Nucleotide-binding</keyword>
<keyword id="KW-1185">Reference proteome</keyword>
<keyword id="KW-0717">Septation</keyword>
<protein>
    <recommendedName>
        <fullName evidence="1">Probable GTP-binding protein EngB</fullName>
    </recommendedName>
</protein>